<dbReference type="EMBL" id="AY710432">
    <property type="protein sequence ID" value="AAU11502.1"/>
    <property type="molecule type" value="mRNA"/>
</dbReference>
<dbReference type="SMR" id="Q66RP5"/>
<dbReference type="Allergome" id="1692">
    <property type="allergen name" value="Tyr p 13"/>
</dbReference>
<dbReference type="Allergome" id="3510">
    <property type="allergen name" value="Tyr p 13.0101"/>
</dbReference>
<dbReference type="GO" id="GO:0005737">
    <property type="term" value="C:cytoplasm"/>
    <property type="evidence" value="ECO:0000250"/>
    <property type="project" value="UniProtKB"/>
</dbReference>
<dbReference type="GO" id="GO:0005504">
    <property type="term" value="F:fatty acid binding"/>
    <property type="evidence" value="ECO:0000250"/>
    <property type="project" value="UniProtKB"/>
</dbReference>
<dbReference type="GO" id="GO:0005324">
    <property type="term" value="F:long-chain fatty acid transmembrane transporter activity"/>
    <property type="evidence" value="ECO:0000250"/>
    <property type="project" value="UniProtKB"/>
</dbReference>
<dbReference type="GO" id="GO:0015909">
    <property type="term" value="P:long-chain fatty acid transport"/>
    <property type="evidence" value="ECO:0000250"/>
    <property type="project" value="UniProtKB"/>
</dbReference>
<dbReference type="CDD" id="cd19614">
    <property type="entry name" value="FABP_Der_p_13-like"/>
    <property type="match status" value="1"/>
</dbReference>
<dbReference type="FunFam" id="2.40.128.20:FF:000001">
    <property type="entry name" value="Fatty acid-binding protein, adipocyte"/>
    <property type="match status" value="1"/>
</dbReference>
<dbReference type="Gene3D" id="2.40.128.20">
    <property type="match status" value="1"/>
</dbReference>
<dbReference type="InterPro" id="IPR012674">
    <property type="entry name" value="Calycin"/>
</dbReference>
<dbReference type="InterPro" id="IPR000463">
    <property type="entry name" value="Fatty_acid-bd"/>
</dbReference>
<dbReference type="InterPro" id="IPR031259">
    <property type="entry name" value="ILBP"/>
</dbReference>
<dbReference type="InterPro" id="IPR000566">
    <property type="entry name" value="Lipocln_cytosolic_FA-bd_dom"/>
</dbReference>
<dbReference type="PANTHER" id="PTHR11955">
    <property type="entry name" value="FATTY ACID BINDING PROTEIN"/>
    <property type="match status" value="1"/>
</dbReference>
<dbReference type="Pfam" id="PF00061">
    <property type="entry name" value="Lipocalin"/>
    <property type="match status" value="1"/>
</dbReference>
<dbReference type="PRINTS" id="PR00178">
    <property type="entry name" value="FATTYACIDBP"/>
</dbReference>
<dbReference type="SUPFAM" id="SSF50814">
    <property type="entry name" value="Lipocalins"/>
    <property type="match status" value="1"/>
</dbReference>
<dbReference type="PROSITE" id="PS00214">
    <property type="entry name" value="FABP"/>
    <property type="match status" value="1"/>
</dbReference>
<feature type="chain" id="PRO_0000456851" description="Fatty acid-binding protein">
    <location>
        <begin position="1"/>
        <end position="131"/>
    </location>
</feature>
<feature type="binding site" evidence="2">
    <location>
        <position position="106"/>
    </location>
    <ligand>
        <name>(5Z,8Z,11Z,14Z)-eicosatetraenoate</name>
        <dbReference type="ChEBI" id="CHEBI:32395"/>
    </ligand>
</feature>
<feature type="binding site" evidence="2">
    <location>
        <position position="106"/>
    </location>
    <ligand>
        <name>(9Z)-octadecenoate</name>
        <dbReference type="ChEBI" id="CHEBI:30823"/>
    </ligand>
</feature>
<feature type="binding site" evidence="2">
    <location>
        <begin position="126"/>
        <end position="128"/>
    </location>
    <ligand>
        <name>(5Z,8Z,11Z,14Z)-eicosatetraenoate</name>
        <dbReference type="ChEBI" id="CHEBI:32395"/>
    </ligand>
</feature>
<feature type="binding site" evidence="2">
    <location>
        <begin position="126"/>
        <end position="128"/>
    </location>
    <ligand>
        <name>(9Z)-octadecenoate</name>
        <dbReference type="ChEBI" id="CHEBI:30823"/>
    </ligand>
</feature>
<protein>
    <recommendedName>
        <fullName evidence="6 8">Fatty acid-binding protein</fullName>
    </recommendedName>
    <alternativeName>
        <fullName evidence="6">Allergen Tyr p 13</fullName>
    </alternativeName>
    <allergenName evidence="7">Tyr p 13.0101</allergenName>
</protein>
<organism evidence="8">
    <name type="scientific">Tyrophagus putrescentiae</name>
    <name type="common">Mold mite</name>
    <name type="synonym">Acarus putrescentiae</name>
    <dbReference type="NCBI Taxonomy" id="59818"/>
    <lineage>
        <taxon>Eukaryota</taxon>
        <taxon>Metazoa</taxon>
        <taxon>Ecdysozoa</taxon>
        <taxon>Arthropoda</taxon>
        <taxon>Chelicerata</taxon>
        <taxon>Arachnida</taxon>
        <taxon>Acari</taxon>
        <taxon>Acariformes</taxon>
        <taxon>Sarcoptiformes</taxon>
        <taxon>Astigmata</taxon>
        <taxon>Acaroidea</taxon>
        <taxon>Acaridae</taxon>
        <taxon>Tyrophaginae</taxon>
        <taxon>Tyrophagus</taxon>
    </lineage>
</organism>
<reference evidence="8" key="1">
    <citation type="journal article" date="2005" name="Clin. Diagn. Lab. Immunol.">
        <title>Immunoglobulin E reactivity of recombinant allergen Tyr p 13 from Tyrophagus putrescentiae homologous to fatty acid binding protein.</title>
        <authorList>
            <person name="Jeong K.Y."/>
            <person name="Kim W.K."/>
            <person name="Lee J.S."/>
            <person name="Lee J."/>
            <person name="Lee I.Y."/>
            <person name="Kim K.E."/>
            <person name="Park J.W."/>
            <person name="Hong C.S."/>
            <person name="Ree H.I."/>
            <person name="Yong T.S."/>
        </authorList>
    </citation>
    <scope>NUCLEOTIDE SEQUENCE [MRNA]</scope>
    <scope>ALLERGEN</scope>
</reference>
<accession>Q66RP5</accession>
<sequence length="131" mass="14573">MVQLNGSYKLEKSDNFDAFLKELGVNFVTRNLAKSASPTVEVIVDGDSYTIKTSSTLKNSEIKFKLGEEFEEDRADGKKVQTSVTKEGDNKLVQVQKGDKPVTIVREFSEEGLTVTATVNGVTSVRFYKRQ</sequence>
<keyword id="KW-0020">Allergen</keyword>
<keyword id="KW-0963">Cytoplasm</keyword>
<keyword id="KW-0445">Lipid transport</keyword>
<keyword id="KW-0446">Lipid-binding</keyword>
<keyword id="KW-0813">Transport</keyword>
<proteinExistence type="evidence at protein level"/>
<comment type="function">
    <text evidence="3">FABPs are thought to play a role in the intracellular transport of long-chain fatty acids and their acyl-CoA esters.</text>
</comment>
<comment type="subcellular location">
    <subcellularLocation>
        <location evidence="1">Cytoplasm</location>
    </subcellularLocation>
</comment>
<comment type="domain">
    <text evidence="1">Forms a beta-barrel structure that accommodates hydrophobic ligands in its interior.</text>
</comment>
<comment type="allergen">
    <text evidence="5">Causes an allergic reaction in human. Recombinant protein binds to IgE in 6% of the 78 mold mite T.putrescentiae-allergic patients tested living in Seoul, Korea.</text>
</comment>
<comment type="similarity">
    <text evidence="4">Belongs to the calycin superfamily. Fatty-acid binding protein (FABP) family.</text>
</comment>
<evidence type="ECO:0000250" key="1">
    <source>
        <dbReference type="UniProtKB" id="A0A0K0MJN3"/>
    </source>
</evidence>
<evidence type="ECO:0000250" key="2">
    <source>
        <dbReference type="UniProtKB" id="P29498"/>
    </source>
</evidence>
<evidence type="ECO:0000250" key="3">
    <source>
        <dbReference type="UniProtKB" id="Q09139"/>
    </source>
</evidence>
<evidence type="ECO:0000255" key="4">
    <source>
        <dbReference type="RuleBase" id="RU003696"/>
    </source>
</evidence>
<evidence type="ECO:0000269" key="5">
    <source>
    </source>
</evidence>
<evidence type="ECO:0000303" key="6">
    <source>
    </source>
</evidence>
<evidence type="ECO:0000305" key="7"/>
<evidence type="ECO:0000312" key="8">
    <source>
        <dbReference type="EMBL" id="AAU11502.1"/>
    </source>
</evidence>
<name>FABP_TYRPU</name>